<name>PAP14_ARATH</name>
<reference key="1">
    <citation type="journal article" date="2000" name="DNA Res.">
        <title>Structural analysis of Arabidopsis thaliana chromosome 5. X. Sequence features of the regions of 3,076,755 bp covered by sixty P1 and TAC clones.</title>
        <authorList>
            <person name="Sato S."/>
            <person name="Nakamura Y."/>
            <person name="Kaneko T."/>
            <person name="Katoh T."/>
            <person name="Asamizu E."/>
            <person name="Kotani H."/>
            <person name="Tabata S."/>
        </authorList>
    </citation>
    <scope>NUCLEOTIDE SEQUENCE [LARGE SCALE GENOMIC DNA]</scope>
    <source>
        <strain>cv. Columbia</strain>
    </source>
</reference>
<reference key="2">
    <citation type="journal article" date="2017" name="Plant J.">
        <title>Araport11: a complete reannotation of the Arabidopsis thaliana reference genome.</title>
        <authorList>
            <person name="Cheng C.Y."/>
            <person name="Krishnakumar V."/>
            <person name="Chan A.P."/>
            <person name="Thibaud-Nissen F."/>
            <person name="Schobel S."/>
            <person name="Town C.D."/>
        </authorList>
    </citation>
    <scope>GENOME REANNOTATION</scope>
    <source>
        <strain>cv. Columbia</strain>
    </source>
</reference>
<reference key="3">
    <citation type="journal article" date="2003" name="Science">
        <title>Empirical analysis of transcriptional activity in the Arabidopsis genome.</title>
        <authorList>
            <person name="Yamada K."/>
            <person name="Lim J."/>
            <person name="Dale J.M."/>
            <person name="Chen H."/>
            <person name="Shinn P."/>
            <person name="Palm C.J."/>
            <person name="Southwick A.M."/>
            <person name="Wu H.C."/>
            <person name="Kim C.J."/>
            <person name="Nguyen M."/>
            <person name="Pham P.K."/>
            <person name="Cheuk R.F."/>
            <person name="Karlin-Newmann G."/>
            <person name="Liu S.X."/>
            <person name="Lam B."/>
            <person name="Sakano H."/>
            <person name="Wu T."/>
            <person name="Yu G."/>
            <person name="Miranda M."/>
            <person name="Quach H.L."/>
            <person name="Tripp M."/>
            <person name="Chang C.H."/>
            <person name="Lee J.M."/>
            <person name="Toriumi M.J."/>
            <person name="Chan M.M."/>
            <person name="Tang C.C."/>
            <person name="Onodera C.S."/>
            <person name="Deng J.M."/>
            <person name="Akiyama K."/>
            <person name="Ansari Y."/>
            <person name="Arakawa T."/>
            <person name="Banh J."/>
            <person name="Banno F."/>
            <person name="Bowser L."/>
            <person name="Brooks S.Y."/>
            <person name="Carninci P."/>
            <person name="Chao Q."/>
            <person name="Choy N."/>
            <person name="Enju A."/>
            <person name="Goldsmith A.D."/>
            <person name="Gurjal M."/>
            <person name="Hansen N.F."/>
            <person name="Hayashizaki Y."/>
            <person name="Johnson-Hopson C."/>
            <person name="Hsuan V.W."/>
            <person name="Iida K."/>
            <person name="Karnes M."/>
            <person name="Khan S."/>
            <person name="Koesema E."/>
            <person name="Ishida J."/>
            <person name="Jiang P.X."/>
            <person name="Jones T."/>
            <person name="Kawai J."/>
            <person name="Kamiya A."/>
            <person name="Meyers C."/>
            <person name="Nakajima M."/>
            <person name="Narusaka M."/>
            <person name="Seki M."/>
            <person name="Sakurai T."/>
            <person name="Satou M."/>
            <person name="Tamse R."/>
            <person name="Vaysberg M."/>
            <person name="Wallender E.K."/>
            <person name="Wong C."/>
            <person name="Yamamura Y."/>
            <person name="Yuan S."/>
            <person name="Shinozaki K."/>
            <person name="Davis R.W."/>
            <person name="Theologis A."/>
            <person name="Ecker J.R."/>
        </authorList>
    </citation>
    <scope>NUCLEOTIDE SEQUENCE [LARGE SCALE MRNA] (ISOFORMS 1 AND 2)</scope>
    <source>
        <strain>cv. Columbia</strain>
    </source>
</reference>
<reference key="4">
    <citation type="journal article" date="2009" name="DNA Res.">
        <title>Analysis of multiple occurrences of alternative splicing events in Arabidopsis thaliana using novel sequenced full-length cDNAs.</title>
        <authorList>
            <person name="Iida K."/>
            <person name="Fukami-Kobayashi K."/>
            <person name="Toyoda A."/>
            <person name="Sakaki Y."/>
            <person name="Kobayashi M."/>
            <person name="Seki M."/>
            <person name="Shinozaki K."/>
        </authorList>
    </citation>
    <scope>NUCLEOTIDE SEQUENCE [LARGE SCALE MRNA] (ISOFORM 2)</scope>
    <source>
        <strain>cv. Columbia</strain>
    </source>
</reference>
<reference key="5">
    <citation type="journal article" date="2003" name="Plant J.">
        <title>Target genes for OBP3, a Dof transcription factor, include novel basic helix-loop-helix domain proteins inducible by salicylic acid.</title>
        <authorList>
            <person name="Kang H.-G."/>
            <person name="Foley R.C."/>
            <person name="Onate-Sanchez L."/>
            <person name="Lin C."/>
            <person name="Singh K.B."/>
        </authorList>
    </citation>
    <scope>FUNCTION</scope>
    <scope>INDUCTION BY SALICYLIC ACID AND JASMONIC ACID</scope>
</reference>
<reference key="6">
    <citation type="journal article" date="2011" name="Phytochemistry">
        <title>Autophosphorylation profiling of Arabidopsis protein kinases using the cell-free system.</title>
        <authorList>
            <person name="Nemoto K."/>
            <person name="Seto T."/>
            <person name="Takahashi H."/>
            <person name="Nozawa A."/>
            <person name="Seki M."/>
            <person name="Shinozaki K."/>
            <person name="Endo Y."/>
            <person name="Sawasaki T."/>
        </authorList>
    </citation>
    <scope>LACK OF AUTOPHOSPHORYLATION</scope>
</reference>
<reference key="7">
    <citation type="journal article" date="2011" name="Trends Plant Sci.">
        <title>Fibrillin protein function: the tip of the iceberg?</title>
        <authorList>
            <person name="Singh D.K."/>
            <person name="McNellis T.W."/>
        </authorList>
    </citation>
    <scope>GENE FAMILY</scope>
    <scope>TISSUE SPECIFICITY</scope>
    <scope>NOMENCLATURE</scope>
</reference>
<gene>
    <name type="primary">PAP14</name>
    <name type="synonym">FBN11</name>
    <name type="synonym">FIB11</name>
    <name type="synonym">ORG1</name>
    <name type="ordered locus">At5g53450</name>
</gene>
<accession>Q9LV04</accession>
<accession>C0Z3D5</accession>
<accession>Q8VZ70</accession>
<protein>
    <recommendedName>
        <fullName>Probable plastid-lipid-associated protein 14, chloroplastic</fullName>
        <shortName>AtPap14</shortName>
    </recommendedName>
    <alternativeName>
        <fullName>Fibrillin-11</fullName>
    </alternativeName>
    <alternativeName>
        <fullName>OBP3-responsive protein 1</fullName>
    </alternativeName>
</protein>
<organism>
    <name type="scientific">Arabidopsis thaliana</name>
    <name type="common">Mouse-ear cress</name>
    <dbReference type="NCBI Taxonomy" id="3702"/>
    <lineage>
        <taxon>Eukaryota</taxon>
        <taxon>Viridiplantae</taxon>
        <taxon>Streptophyta</taxon>
        <taxon>Embryophyta</taxon>
        <taxon>Tracheophyta</taxon>
        <taxon>Spermatophyta</taxon>
        <taxon>Magnoliopsida</taxon>
        <taxon>eudicotyledons</taxon>
        <taxon>Gunneridae</taxon>
        <taxon>Pentapetalae</taxon>
        <taxon>rosids</taxon>
        <taxon>malvids</taxon>
        <taxon>Brassicales</taxon>
        <taxon>Brassicaceae</taxon>
        <taxon>Camelineae</taxon>
        <taxon>Arabidopsis</taxon>
    </lineage>
</organism>
<keyword id="KW-0025">Alternative splicing</keyword>
<keyword id="KW-0150">Chloroplast</keyword>
<keyword id="KW-0934">Plastid</keyword>
<keyword id="KW-1185">Reference proteome</keyword>
<keyword id="KW-0809">Transit peptide</keyword>
<feature type="transit peptide" description="Chloroplast" evidence="2">
    <location>
        <begin position="1"/>
        <end position="52"/>
    </location>
</feature>
<feature type="chain" id="PRO_0000424244" description="Probable plastid-lipid-associated protein 14, chloroplastic">
    <location>
        <begin position="53"/>
        <end position="670"/>
    </location>
</feature>
<feature type="domain" description="Protein kinase" evidence="3">
    <location>
        <begin position="88"/>
        <end position="399"/>
    </location>
</feature>
<feature type="splice variant" id="VSP_053357" description="In isoform 2." evidence="6 7">
    <location>
        <begin position="1"/>
        <end position="80"/>
    </location>
</feature>
<evidence type="ECO:0000250" key="1"/>
<evidence type="ECO:0000255" key="2"/>
<evidence type="ECO:0000255" key="3">
    <source>
        <dbReference type="PROSITE-ProRule" id="PRU00159"/>
    </source>
</evidence>
<evidence type="ECO:0000269" key="4">
    <source>
    </source>
</evidence>
<evidence type="ECO:0000269" key="5">
    <source>
    </source>
</evidence>
<evidence type="ECO:0000303" key="6">
    <source>
    </source>
</evidence>
<evidence type="ECO:0000303" key="7">
    <source>
    </source>
</evidence>
<evidence type="ECO:0000305" key="8"/>
<dbReference type="EMBL" id="AB020754">
    <property type="protein sequence ID" value="BAA97322.1"/>
    <property type="molecule type" value="Genomic_DNA"/>
</dbReference>
<dbReference type="EMBL" id="CP002688">
    <property type="protein sequence ID" value="AED96355.1"/>
    <property type="molecule type" value="Genomic_DNA"/>
</dbReference>
<dbReference type="EMBL" id="CP002688">
    <property type="protein sequence ID" value="AED96356.1"/>
    <property type="molecule type" value="Genomic_DNA"/>
</dbReference>
<dbReference type="EMBL" id="AY065207">
    <property type="protein sequence ID" value="AAL38683.1"/>
    <property type="molecule type" value="mRNA"/>
</dbReference>
<dbReference type="EMBL" id="BT002001">
    <property type="protein sequence ID" value="AAN72012.1"/>
    <property type="molecule type" value="mRNA"/>
</dbReference>
<dbReference type="EMBL" id="BT008410">
    <property type="protein sequence ID" value="AAP37769.1"/>
    <property type="molecule type" value="mRNA"/>
</dbReference>
<dbReference type="EMBL" id="AK319099">
    <property type="protein sequence ID" value="BAH57214.1"/>
    <property type="status" value="ALT_SEQ"/>
    <property type="molecule type" value="mRNA"/>
</dbReference>
<dbReference type="RefSeq" id="NP_200157.2">
    <molecule id="Q9LV04-2"/>
    <property type="nucleotide sequence ID" value="NM_124724.5"/>
</dbReference>
<dbReference type="RefSeq" id="NP_851182.1">
    <molecule id="Q9LV04-1"/>
    <property type="nucleotide sequence ID" value="NM_180851.2"/>
</dbReference>
<dbReference type="BioGRID" id="20671">
    <property type="interactions" value="6"/>
</dbReference>
<dbReference type="FunCoup" id="Q9LV04">
    <property type="interactions" value="204"/>
</dbReference>
<dbReference type="IntAct" id="Q9LV04">
    <property type="interactions" value="7"/>
</dbReference>
<dbReference type="STRING" id="3702.Q9LV04"/>
<dbReference type="iPTMnet" id="Q9LV04"/>
<dbReference type="PaxDb" id="3702-AT5G53450.1"/>
<dbReference type="ProteomicsDB" id="234946">
    <molecule id="Q9LV04-1"/>
</dbReference>
<dbReference type="EnsemblPlants" id="AT5G53450.1">
    <molecule id="Q9LV04-1"/>
    <property type="protein sequence ID" value="AT5G53450.1"/>
    <property type="gene ID" value="AT5G53450"/>
</dbReference>
<dbReference type="EnsemblPlants" id="AT5G53450.2">
    <molecule id="Q9LV04-2"/>
    <property type="protein sequence ID" value="AT5G53450.2"/>
    <property type="gene ID" value="AT5G53450"/>
</dbReference>
<dbReference type="GeneID" id="835426"/>
<dbReference type="Gramene" id="AT5G53450.1">
    <molecule id="Q9LV04-1"/>
    <property type="protein sequence ID" value="AT5G53450.1"/>
    <property type="gene ID" value="AT5G53450"/>
</dbReference>
<dbReference type="Gramene" id="AT5G53450.2">
    <molecule id="Q9LV04-2"/>
    <property type="protein sequence ID" value="AT5G53450.2"/>
    <property type="gene ID" value="AT5G53450"/>
</dbReference>
<dbReference type="KEGG" id="ath:AT5G53450"/>
<dbReference type="Araport" id="AT5G53450"/>
<dbReference type="TAIR" id="AT5G53450">
    <property type="gene designation" value="ORG1"/>
</dbReference>
<dbReference type="eggNOG" id="KOG0594">
    <property type="taxonomic scope" value="Eukaryota"/>
</dbReference>
<dbReference type="InParanoid" id="Q9LV04"/>
<dbReference type="OMA" id="FTLVHGH"/>
<dbReference type="OrthoDB" id="1881000at2759"/>
<dbReference type="PhylomeDB" id="Q9LV04"/>
<dbReference type="PRO" id="PR:Q9LV04"/>
<dbReference type="Proteomes" id="UP000006548">
    <property type="component" value="Chromosome 5"/>
</dbReference>
<dbReference type="ExpressionAtlas" id="Q9LV04">
    <property type="expression patterns" value="baseline and differential"/>
</dbReference>
<dbReference type="GO" id="GO:0009507">
    <property type="term" value="C:chloroplast"/>
    <property type="evidence" value="ECO:0000314"/>
    <property type="project" value="TAIR"/>
</dbReference>
<dbReference type="GO" id="GO:0005524">
    <property type="term" value="F:ATP binding"/>
    <property type="evidence" value="ECO:0007669"/>
    <property type="project" value="InterPro"/>
</dbReference>
<dbReference type="GO" id="GO:0004672">
    <property type="term" value="F:protein kinase activity"/>
    <property type="evidence" value="ECO:0007669"/>
    <property type="project" value="InterPro"/>
</dbReference>
<dbReference type="GO" id="GO:0006970">
    <property type="term" value="P:response to osmotic stress"/>
    <property type="evidence" value="ECO:0000315"/>
    <property type="project" value="TAIR"/>
</dbReference>
<dbReference type="Gene3D" id="1.10.510.10">
    <property type="entry name" value="Transferase(Phosphotransferase) domain 1"/>
    <property type="match status" value="1"/>
</dbReference>
<dbReference type="InterPro" id="IPR011009">
    <property type="entry name" value="Kinase-like_dom_sf"/>
</dbReference>
<dbReference type="InterPro" id="IPR006843">
    <property type="entry name" value="PAP/fibrillin_dom"/>
</dbReference>
<dbReference type="InterPro" id="IPR000719">
    <property type="entry name" value="Prot_kinase_dom"/>
</dbReference>
<dbReference type="PANTHER" id="PTHR46699:SF6">
    <property type="entry name" value="PLASTID-LIPID-ASSOCIATED PROTEIN 14, CHLOROPLASTIC-RELATED"/>
    <property type="match status" value="1"/>
</dbReference>
<dbReference type="PANTHER" id="PTHR46699">
    <property type="entry name" value="SERINE/THREONINE-PROTEIN KINASE STN8, CHLOROPLASTIC-RELATED"/>
    <property type="match status" value="1"/>
</dbReference>
<dbReference type="Pfam" id="PF04755">
    <property type="entry name" value="PAP_fibrillin"/>
    <property type="match status" value="1"/>
</dbReference>
<dbReference type="Pfam" id="PF00069">
    <property type="entry name" value="Pkinase"/>
    <property type="match status" value="1"/>
</dbReference>
<dbReference type="SMART" id="SM00220">
    <property type="entry name" value="S_TKc"/>
    <property type="match status" value="1"/>
</dbReference>
<dbReference type="SUPFAM" id="SSF56112">
    <property type="entry name" value="Protein kinase-like (PK-like)"/>
    <property type="match status" value="1"/>
</dbReference>
<dbReference type="PROSITE" id="PS50011">
    <property type="entry name" value="PROTEIN_KINASE_DOM"/>
    <property type="match status" value="1"/>
</dbReference>
<proteinExistence type="evidence at protein level"/>
<comment type="function">
    <text evidence="4">Directly regulated by DOF3.6/OBP3; unknown function.</text>
</comment>
<comment type="subcellular location">
    <subcellularLocation>
        <location evidence="1">Plastid</location>
        <location evidence="1">Chloroplast</location>
    </subcellularLocation>
</comment>
<comment type="alternative products">
    <event type="alternative splicing"/>
    <isoform>
        <id>Q9LV04-1</id>
        <name>1</name>
        <sequence type="displayed"/>
    </isoform>
    <isoform>
        <id>Q9LV04-2</id>
        <name>2</name>
        <sequence type="described" ref="VSP_053357"/>
    </isoform>
</comment>
<comment type="tissue specificity">
    <text evidence="5">Expressed in roots.</text>
</comment>
<comment type="induction">
    <text evidence="4">Up-regulated by salicylic acid and down-regulated by jasmonic acid.</text>
</comment>
<comment type="domain">
    <text>The protein kinase domain is predicted to be catalytically inactive.</text>
</comment>
<comment type="PTM">
    <text>Not autophosphorylated.</text>
</comment>
<comment type="similarity">
    <text evidence="8">Belongs to the PAP/fibrillin family.</text>
</comment>
<comment type="sequence caution" evidence="8">
    <conflict type="miscellaneous discrepancy">
        <sequence resource="EMBL-CDS" id="BAH57214"/>
    </conflict>
    <text>Intron retention.</text>
</comment>
<sequence length="670" mass="75766">MALCGVCSTPNLPNLQVFRSVRNSSIGYKRNHSLWQLRSSSFRAKSVIFHCSSSLRQSPSNVEEIDDNPSVSLEDESAHVMQFKWSDFRILDRVSIGHGGRADELVFEAIVQVPDSPLFNQGVVLRKLNTTRAQRRGRRAIEVFKKLVRRRLLYHSYSMQVHGYITNNLSDDQYSFTLVHGCHGSFSIRHWLQQSDWIPTLEATLALDEESFRRVGDDTTGGPAVSRQLRLIRTLMRDILIGVNYLHSHGLAHTELRLENVHISPVDRHIKVGILGNAADFNGDVPSTSNAYSTMDRRQMMIAFDMRCVGFMMAKMVLQELMDPLIFAKLKSFLAKGNDPSSLREFFVTTLNTNSESGNTGVQILDRNWGAGWHLLSLLIATRPSERISCLDALKHPFLCGPRWRVAPSMDIIRWGLGSTAVKISEEYIYRMPQRQRLAHFIGLMEMLNPYPKPNCWLELLPGRWRLLYSTGKHIGLTLRQPSTRALIGNVHLTITRASESINNTSLSFTSDIRFTAITSKDWPHNKIGAAGKLQTLSQFRLIAGKRLYLKEEKKNIGKFSMGEPDAEEGLAEKLETEKWKKVVPFKEFPSSLPVAKLVSGEIEVTMNMNDHIDSPGSVIGEVRKQIPPEMFDLSKLVCGTYIDSRLLVLRCVNGSALLFTRSSLDHKSM</sequence>